<reference key="1">
    <citation type="journal article" date="2002" name="Proc. Natl. Acad. Sci. U.S.A.">
        <title>Genome sequence of Streptococcus mutans UA159, a cariogenic dental pathogen.</title>
        <authorList>
            <person name="Ajdic D.J."/>
            <person name="McShan W.M."/>
            <person name="McLaughlin R.E."/>
            <person name="Savic G."/>
            <person name="Chang J."/>
            <person name="Carson M.B."/>
            <person name="Primeaux C."/>
            <person name="Tian R."/>
            <person name="Kenton S."/>
            <person name="Jia H.G."/>
            <person name="Lin S.P."/>
            <person name="Qian Y."/>
            <person name="Li S."/>
            <person name="Zhu H."/>
            <person name="Najar F.Z."/>
            <person name="Lai H."/>
            <person name="White J."/>
            <person name="Roe B.A."/>
            <person name="Ferretti J.J."/>
        </authorList>
    </citation>
    <scope>NUCLEOTIDE SEQUENCE [LARGE SCALE GENOMIC DNA]</scope>
    <source>
        <strain>ATCC 700610 / UA159</strain>
    </source>
</reference>
<dbReference type="EMBL" id="AE014133">
    <property type="protein sequence ID" value="AAN59309.1"/>
    <property type="molecule type" value="Genomic_DNA"/>
</dbReference>
<dbReference type="RefSeq" id="NP_722003.1">
    <property type="nucleotide sequence ID" value="NC_004350.2"/>
</dbReference>
<dbReference type="RefSeq" id="WP_002262674.1">
    <property type="nucleotide sequence ID" value="NC_004350.2"/>
</dbReference>
<dbReference type="SMR" id="Q8DST9"/>
<dbReference type="STRING" id="210007.SMU_1670c"/>
<dbReference type="KEGG" id="smu:SMU_1670c"/>
<dbReference type="PATRIC" id="fig|210007.7.peg.1492"/>
<dbReference type="eggNOG" id="COG4471">
    <property type="taxonomic scope" value="Bacteria"/>
</dbReference>
<dbReference type="HOGENOM" id="CLU_159890_1_0_9"/>
<dbReference type="OrthoDB" id="2990788at2"/>
<dbReference type="PhylomeDB" id="Q8DST9"/>
<dbReference type="Proteomes" id="UP000002512">
    <property type="component" value="Chromosome"/>
</dbReference>
<dbReference type="GO" id="GO:0005737">
    <property type="term" value="C:cytoplasm"/>
    <property type="evidence" value="ECO:0007669"/>
    <property type="project" value="UniProtKB-SubCell"/>
</dbReference>
<dbReference type="HAMAP" id="MF_01126">
    <property type="entry name" value="UPF0298"/>
    <property type="match status" value="1"/>
</dbReference>
<dbReference type="InterPro" id="IPR016979">
    <property type="entry name" value="DUF2129"/>
</dbReference>
<dbReference type="NCBIfam" id="NF002631">
    <property type="entry name" value="PRK02302.1"/>
    <property type="match status" value="1"/>
</dbReference>
<dbReference type="Pfam" id="PF09902">
    <property type="entry name" value="DUF2129"/>
    <property type="match status" value="1"/>
</dbReference>
<dbReference type="PIRSF" id="PIRSF031653">
    <property type="entry name" value="UCP031653"/>
    <property type="match status" value="1"/>
</dbReference>
<sequence length="82" mass="9828">MFEKKKRLGLIVYLYYNRDARKLNKYGNVVYHSRRMRYSVLYIAQDETDKIIEEIGALKFVKKVLPSYIDTIDQNFVGSLMR</sequence>
<keyword id="KW-0963">Cytoplasm</keyword>
<keyword id="KW-1185">Reference proteome</keyword>
<name>Y1670_STRMU</name>
<evidence type="ECO:0000255" key="1">
    <source>
        <dbReference type="HAMAP-Rule" id="MF_01126"/>
    </source>
</evidence>
<proteinExistence type="inferred from homology"/>
<protein>
    <recommendedName>
        <fullName evidence="1">UPF0298 protein SMU_1670c</fullName>
    </recommendedName>
</protein>
<accession>Q8DST9</accession>
<gene>
    <name type="ordered locus">SMU_1670c</name>
</gene>
<organism>
    <name type="scientific">Streptococcus mutans serotype c (strain ATCC 700610 / UA159)</name>
    <dbReference type="NCBI Taxonomy" id="210007"/>
    <lineage>
        <taxon>Bacteria</taxon>
        <taxon>Bacillati</taxon>
        <taxon>Bacillota</taxon>
        <taxon>Bacilli</taxon>
        <taxon>Lactobacillales</taxon>
        <taxon>Streptococcaceae</taxon>
        <taxon>Streptococcus</taxon>
    </lineage>
</organism>
<comment type="subcellular location">
    <subcellularLocation>
        <location evidence="1">Cytoplasm</location>
    </subcellularLocation>
</comment>
<comment type="similarity">
    <text evidence="1">Belongs to the UPF0298 family.</text>
</comment>
<feature type="chain" id="PRO_0000074675" description="UPF0298 protein SMU_1670c">
    <location>
        <begin position="1"/>
        <end position="82"/>
    </location>
</feature>